<protein>
    <recommendedName>
        <fullName evidence="1">Phosphoenolpyruvate transferase</fullName>
        <ecNumber evidence="1">2.7.8.28</ecNumber>
    </recommendedName>
    <alternativeName>
        <fullName evidence="1">EPPG:FO PEP transferase</fullName>
    </alternativeName>
</protein>
<sequence>MKVTVLVGGVGGARFLLGVQHLLGLGQFARDDARGPDAHELTAVVNVGDDTWMFGVRICPDLDTCMYTLGGGIDPDRGWGHRDETWHAKEELAAYGVQPDWFGLGDRDLATHLVRSQMLRAGYPLSQVTEALCDRWNPGARLLPASDDRSETHVVITDPDTDERRAIHFQEWWVRYRAKVPTHSFAFVGADKATTAPGVTDAIADADVVLLAPSNPVVSIGSILAIPGIRGALRSTSAKIIGYSPIIAGKPLRGMADECLSVIGVASTSEAVGRHYGARSGTGILDGWLVHEGDSAQIDGVQVEAVPLLMTDPATTAEMVRAGVRLAGVTL</sequence>
<organism>
    <name type="scientific">Mycobacterium sp. (strain MCS)</name>
    <dbReference type="NCBI Taxonomy" id="164756"/>
    <lineage>
        <taxon>Bacteria</taxon>
        <taxon>Bacillati</taxon>
        <taxon>Actinomycetota</taxon>
        <taxon>Actinomycetes</taxon>
        <taxon>Mycobacteriales</taxon>
        <taxon>Mycobacteriaceae</taxon>
        <taxon>Mycobacterium</taxon>
    </lineage>
</organism>
<comment type="function">
    <text evidence="1">Catalyzes the transfer of the phosphoenolpyruvate moiety from enoylpyruvoyl-2-diphospho-5'-guanosine (EPPG) to 7,8-didemethyl-8-hydroxy-5-deazariboflavin (FO) with the formation of dehydro coenzyme F420-0 and GMP.</text>
</comment>
<comment type="catalytic activity">
    <reaction evidence="1">
        <text>enolpyruvoyl-2-diphospho-5'-guanosine + 7,8-didemethyl-8-hydroxy-5-deazariboflavin = dehydro coenzyme F420-0 + GMP + H(+)</text>
        <dbReference type="Rhea" id="RHEA:27510"/>
        <dbReference type="ChEBI" id="CHEBI:15378"/>
        <dbReference type="ChEBI" id="CHEBI:58115"/>
        <dbReference type="ChEBI" id="CHEBI:59904"/>
        <dbReference type="ChEBI" id="CHEBI:143701"/>
        <dbReference type="ChEBI" id="CHEBI:143705"/>
        <dbReference type="EC" id="2.7.8.28"/>
    </reaction>
</comment>
<comment type="cofactor">
    <cofactor evidence="1">
        <name>Mg(2+)</name>
        <dbReference type="ChEBI" id="CHEBI:18420"/>
    </cofactor>
</comment>
<comment type="pathway">
    <text evidence="1">Cofactor biosynthesis; coenzyme F420 biosynthesis.</text>
</comment>
<comment type="subunit">
    <text evidence="1">Homodimer.</text>
</comment>
<comment type="similarity">
    <text evidence="1">Belongs to the CofD family.</text>
</comment>
<evidence type="ECO:0000255" key="1">
    <source>
        <dbReference type="HAMAP-Rule" id="MF_01257"/>
    </source>
</evidence>
<proteinExistence type="inferred from homology"/>
<accession>Q1BCE8</accession>
<name>FBIA_MYCSS</name>
<dbReference type="EC" id="2.7.8.28" evidence="1"/>
<dbReference type="EMBL" id="CP000384">
    <property type="protein sequence ID" value="ABG07436.1"/>
    <property type="molecule type" value="Genomic_DNA"/>
</dbReference>
<dbReference type="SMR" id="Q1BCE8"/>
<dbReference type="KEGG" id="mmc:Mmcs_1324"/>
<dbReference type="HOGENOM" id="CLU_055795_0_0_11"/>
<dbReference type="BioCyc" id="MSP164756:G1G6O-1351-MONOMER"/>
<dbReference type="UniPathway" id="UPA00071"/>
<dbReference type="GO" id="GO:0043743">
    <property type="term" value="F:LPPG:FO 2-phospho-L-lactate transferase activity"/>
    <property type="evidence" value="ECO:0007669"/>
    <property type="project" value="UniProtKB-EC"/>
</dbReference>
<dbReference type="GO" id="GO:0000287">
    <property type="term" value="F:magnesium ion binding"/>
    <property type="evidence" value="ECO:0007669"/>
    <property type="project" value="InterPro"/>
</dbReference>
<dbReference type="GO" id="GO:0052645">
    <property type="term" value="P:F420-0 metabolic process"/>
    <property type="evidence" value="ECO:0007669"/>
    <property type="project" value="UniProtKB-UniRule"/>
</dbReference>
<dbReference type="CDD" id="cd07186">
    <property type="entry name" value="CofD_like"/>
    <property type="match status" value="1"/>
</dbReference>
<dbReference type="FunFam" id="1.10.8.240:FF:000001">
    <property type="entry name" value="2-phospho-L-lactate transferase"/>
    <property type="match status" value="1"/>
</dbReference>
<dbReference type="Gene3D" id="1.10.8.240">
    <property type="entry name" value="CofD-like domain"/>
    <property type="match status" value="1"/>
</dbReference>
<dbReference type="Gene3D" id="3.40.50.10680">
    <property type="entry name" value="CofD-like domains"/>
    <property type="match status" value="1"/>
</dbReference>
<dbReference type="HAMAP" id="MF_01257">
    <property type="entry name" value="CofD"/>
    <property type="match status" value="1"/>
</dbReference>
<dbReference type="InterPro" id="IPR002882">
    <property type="entry name" value="CofD"/>
</dbReference>
<dbReference type="InterPro" id="IPR038136">
    <property type="entry name" value="CofD-like_dom_sf"/>
</dbReference>
<dbReference type="InterPro" id="IPR010115">
    <property type="entry name" value="FbiA/CofD"/>
</dbReference>
<dbReference type="NCBIfam" id="TIGR01819">
    <property type="entry name" value="F420_cofD"/>
    <property type="match status" value="1"/>
</dbReference>
<dbReference type="PANTHER" id="PTHR43007">
    <property type="entry name" value="2-PHOSPHO-L-LACTATE TRANSFERASE"/>
    <property type="match status" value="1"/>
</dbReference>
<dbReference type="PANTHER" id="PTHR43007:SF1">
    <property type="entry name" value="2-PHOSPHO-L-LACTATE TRANSFERASE"/>
    <property type="match status" value="1"/>
</dbReference>
<dbReference type="Pfam" id="PF01933">
    <property type="entry name" value="CofD"/>
    <property type="match status" value="1"/>
</dbReference>
<dbReference type="SUPFAM" id="SSF142338">
    <property type="entry name" value="CofD-like"/>
    <property type="match status" value="1"/>
</dbReference>
<feature type="chain" id="PRO_1000067254" description="Phosphoenolpyruvate transferase">
    <location>
        <begin position="1"/>
        <end position="331"/>
    </location>
</feature>
<feature type="binding site" evidence="1">
    <location>
        <position position="63"/>
    </location>
    <ligand>
        <name>7,8-didemethyl-8-hydroxy-5-deazariboflavin</name>
        <dbReference type="ChEBI" id="CHEBI:59904"/>
    </ligand>
</feature>
<reference key="1">
    <citation type="submission" date="2006-06" db="EMBL/GenBank/DDBJ databases">
        <title>Complete sequence of chromosome of Mycobacterium sp. MCS.</title>
        <authorList>
            <consortium name="US DOE Joint Genome Institute"/>
            <person name="Copeland A."/>
            <person name="Lucas S."/>
            <person name="Lapidus A."/>
            <person name="Barry K."/>
            <person name="Detter J.C."/>
            <person name="Glavina del Rio T."/>
            <person name="Hammon N."/>
            <person name="Israni S."/>
            <person name="Dalin E."/>
            <person name="Tice H."/>
            <person name="Pitluck S."/>
            <person name="Martinez M."/>
            <person name="Schmutz J."/>
            <person name="Larimer F."/>
            <person name="Land M."/>
            <person name="Hauser L."/>
            <person name="Kyrpides N."/>
            <person name="Kim E."/>
            <person name="Miller C.D."/>
            <person name="Hughes J.E."/>
            <person name="Anderson A.J."/>
            <person name="Sims R.C."/>
            <person name="Richardson P."/>
        </authorList>
    </citation>
    <scope>NUCLEOTIDE SEQUENCE [LARGE SCALE GENOMIC DNA]</scope>
    <source>
        <strain>MCS</strain>
    </source>
</reference>
<keyword id="KW-0460">Magnesium</keyword>
<keyword id="KW-0808">Transferase</keyword>
<gene>
    <name evidence="1" type="primary">fbiA</name>
    <name type="ordered locus">Mmcs_1324</name>
</gene>